<gene>
    <name type="primary">phaC</name>
</gene>
<accession>P52070</accession>
<reference key="1">
    <citation type="journal article" date="1993" name="Appl. Microbiol. Biotechnol.">
        <title>Cloning and characterization of the Methylobacterium extorquens polyhydroxyalkanoic-acid-synthase structural gene.</title>
        <authorList>
            <person name="Valentin H.E."/>
            <person name="Steinbuechel A."/>
        </authorList>
    </citation>
    <scope>NUCLEOTIDE SEQUENCE [GENOMIC DNA]</scope>
    <source>
        <strain>IBT 6</strain>
    </source>
</reference>
<name>PHAC_METEX</name>
<evidence type="ECO:0000250" key="1"/>
<evidence type="ECO:0000255" key="2"/>
<evidence type="ECO:0000305" key="3"/>
<organism>
    <name type="scientific">Methylorubrum extorquens</name>
    <name type="common">Methylobacterium dichloromethanicum</name>
    <name type="synonym">Methylobacterium extorquens</name>
    <dbReference type="NCBI Taxonomy" id="408"/>
    <lineage>
        <taxon>Bacteria</taxon>
        <taxon>Pseudomonadati</taxon>
        <taxon>Pseudomonadota</taxon>
        <taxon>Alphaproteobacteria</taxon>
        <taxon>Hyphomicrobiales</taxon>
        <taxon>Methylobacteriaceae</taxon>
        <taxon>Methylorubrum</taxon>
    </lineage>
</organism>
<comment type="subcellular location">
    <subcellularLocation>
        <location evidence="1">Cytoplasm</location>
    </subcellularLocation>
</comment>
<comment type="similarity">
    <text evidence="3">Belongs to the PHA/PHB synthase family.</text>
</comment>
<dbReference type="EC" id="2.3.1.-"/>
<dbReference type="EMBL" id="L07893">
    <property type="protein sequence ID" value="AAA72330.1"/>
    <property type="molecule type" value="Genomic_DNA"/>
</dbReference>
<dbReference type="SMR" id="P52070"/>
<dbReference type="ESTHER" id="metex-phac">
    <property type="family name" value="PHA_synth_I"/>
</dbReference>
<dbReference type="GO" id="GO:0005737">
    <property type="term" value="C:cytoplasm"/>
    <property type="evidence" value="ECO:0007669"/>
    <property type="project" value="UniProtKB-SubCell"/>
</dbReference>
<dbReference type="GO" id="GO:0016746">
    <property type="term" value="F:acyltransferase activity"/>
    <property type="evidence" value="ECO:0007669"/>
    <property type="project" value="UniProtKB-KW"/>
</dbReference>
<dbReference type="GO" id="GO:0042621">
    <property type="term" value="P:poly(3-hydroxyalkanoate) biosynthetic process"/>
    <property type="evidence" value="ECO:0007669"/>
    <property type="project" value="UniProtKB-KW"/>
</dbReference>
<dbReference type="GO" id="GO:0042619">
    <property type="term" value="P:poly-hydroxybutyrate biosynthetic process"/>
    <property type="evidence" value="ECO:0007669"/>
    <property type="project" value="InterPro"/>
</dbReference>
<dbReference type="Gene3D" id="3.40.50.1820">
    <property type="entry name" value="alpha/beta hydrolase"/>
    <property type="match status" value="1"/>
</dbReference>
<dbReference type="InterPro" id="IPR000073">
    <property type="entry name" value="AB_hydrolase_1"/>
</dbReference>
<dbReference type="InterPro" id="IPR029058">
    <property type="entry name" value="AB_hydrolase_fold"/>
</dbReference>
<dbReference type="InterPro" id="IPR051321">
    <property type="entry name" value="PHA/PHB_synthase"/>
</dbReference>
<dbReference type="InterPro" id="IPR010963">
    <property type="entry name" value="PHA_synth_I"/>
</dbReference>
<dbReference type="InterPro" id="IPR010941">
    <property type="entry name" value="PhaC_N"/>
</dbReference>
<dbReference type="NCBIfam" id="TIGR01838">
    <property type="entry name" value="PHA_synth_I"/>
    <property type="match status" value="1"/>
</dbReference>
<dbReference type="PANTHER" id="PTHR36837">
    <property type="entry name" value="POLY(3-HYDROXYALKANOATE) POLYMERASE SUBUNIT PHAC"/>
    <property type="match status" value="1"/>
</dbReference>
<dbReference type="PANTHER" id="PTHR36837:SF5">
    <property type="entry name" value="POLY-3-HYDROXYBUTYRATE SYNTHASE"/>
    <property type="match status" value="1"/>
</dbReference>
<dbReference type="Pfam" id="PF00561">
    <property type="entry name" value="Abhydrolase_1"/>
    <property type="match status" value="1"/>
</dbReference>
<dbReference type="Pfam" id="PF07167">
    <property type="entry name" value="PhaC_N"/>
    <property type="match status" value="1"/>
</dbReference>
<dbReference type="SUPFAM" id="SSF53474">
    <property type="entry name" value="alpha/beta-Hydrolases"/>
    <property type="match status" value="1"/>
</dbReference>
<proteinExistence type="inferred from homology"/>
<feature type="chain" id="PRO_0000215467" description="Poly(3-hydroxyalkanoate) polymerase">
    <location>
        <begin position="1"/>
        <end position="605"/>
    </location>
</feature>
<feature type="domain" description="AB hydrolase-1" evidence="2">
    <location>
        <begin position="319"/>
        <end position="527"/>
    </location>
</feature>
<feature type="active site" evidence="2">
    <location>
        <position position="341"/>
    </location>
</feature>
<protein>
    <recommendedName>
        <fullName>Poly(3-hydroxyalkanoate) polymerase</fullName>
        <shortName>PHA polymerase</shortName>
        <ecNumber>2.3.1.-</ecNumber>
    </recommendedName>
    <alternativeName>
        <fullName>PHA synthase</fullName>
    </alternativeName>
    <alternativeName>
        <fullName>Polyhydroxyalkanoic acid synthase</fullName>
    </alternativeName>
</protein>
<sequence length="605" mass="66773">MGTERTNPAAPDFETIARNANQLAEVFRQSAAASLKPFEPAGQGALLPGANLQGASEIDEMTRTLTRVAETWLKDPEKALQAQTKLGQSFAALWASTLTRMQGAVTEPVVQPPPTDKRFAHADWSANPVFDLIKQSYLLLGRWAEEMVETAEGIDEHTRHKAEFYLRQLLSAYSPSNFVMTNPELLRQTLEEGGANLMRGMKMLQEDLEAGGGQLRVRQTDLSAFTFGKDVAVTPGEVIFRNDLMELIQYAPTTETVLKRPLLIVPPWINKFYILDLNPQKSLIGWMVSQGITVFVISWVNPDERHRDKDFESYMREGIETAIDMIGVATGETDVAAAGYCVGGTLLAVTLAYQAATGNRRIKSATFLTTQVDFTHAGDLKVFADEGQIKAIEERMAEHGYLEGARMANAFNMLRPNDLIWSYVVNNYVRGKAPAAFDLLYWNADATRMPAANHSFYLRNCYLNNTLAKGQMVLGNVRLDLKKVKVPVFNLATREDHIAPALSVFEGSAKFGGKVDYVLAGSGHIAGVVAPPGPKAKYGFRTGGPARGRFEDWVAAATEHPGSWWPYWYKWLEEQAPERVPARIPGTGALPSLAPAPGTYVRMKA</sequence>
<keyword id="KW-0012">Acyltransferase</keyword>
<keyword id="KW-0963">Cytoplasm</keyword>
<keyword id="KW-0577">PHA biosynthesis</keyword>
<keyword id="KW-0808">Transferase</keyword>